<protein>
    <recommendedName>
        <fullName>Phosphoglycerate kinase</fullName>
        <ecNumber evidence="4">2.7.2.3</ecNumber>
    </recommendedName>
</protein>
<gene>
    <name type="primary">pgk1</name>
    <name type="ORF">SPBC14F5.04c</name>
</gene>
<feature type="chain" id="PRO_0000145889" description="Phosphoglycerate kinase">
    <location>
        <begin position="1"/>
        <end position="414"/>
    </location>
</feature>
<feature type="binding site" evidence="3">
    <location>
        <position position="23"/>
    </location>
    <ligand>
        <name>(2R)-3-phosphoglycerate</name>
        <dbReference type="ChEBI" id="CHEBI:58272"/>
    </ligand>
</feature>
<feature type="binding site" evidence="5">
    <location>
        <position position="24"/>
    </location>
    <ligand>
        <name>(2R)-3-phosphoglycerate</name>
        <dbReference type="ChEBI" id="CHEBI:58272"/>
    </ligand>
</feature>
<feature type="binding site" evidence="3">
    <location>
        <position position="25"/>
    </location>
    <ligand>
        <name>(2R)-3-phosphoglycerate</name>
        <dbReference type="ChEBI" id="CHEBI:58272"/>
    </ligand>
</feature>
<feature type="binding site" evidence="5">
    <location>
        <position position="26"/>
    </location>
    <ligand>
        <name>(2R)-3-phosphoglycerate</name>
        <dbReference type="ChEBI" id="CHEBI:58272"/>
    </ligand>
</feature>
<feature type="binding site" evidence="5">
    <location>
        <position position="39"/>
    </location>
    <ligand>
        <name>(2R)-3-phosphoglycerate</name>
        <dbReference type="ChEBI" id="CHEBI:58272"/>
    </ligand>
</feature>
<feature type="binding site" evidence="3">
    <location>
        <position position="62"/>
    </location>
    <ligand>
        <name>(2R)-3-phosphoglycerate</name>
        <dbReference type="ChEBI" id="CHEBI:58272"/>
    </ligand>
</feature>
<feature type="binding site" evidence="5">
    <location>
        <position position="63"/>
    </location>
    <ligand>
        <name>(2R)-3-phosphoglycerate</name>
        <dbReference type="ChEBI" id="CHEBI:58272"/>
    </ligand>
</feature>
<feature type="binding site" evidence="3">
    <location>
        <position position="65"/>
    </location>
    <ligand>
        <name>(2R)-3-phosphoglycerate</name>
        <dbReference type="ChEBI" id="CHEBI:58272"/>
    </ligand>
</feature>
<feature type="binding site" evidence="5">
    <location>
        <position position="66"/>
    </location>
    <ligand>
        <name>(2R)-3-phosphoglycerate</name>
        <dbReference type="ChEBI" id="CHEBI:58272"/>
    </ligand>
</feature>
<feature type="binding site" evidence="3">
    <location>
        <position position="121"/>
    </location>
    <ligand>
        <name>(2R)-3-phosphoglycerate</name>
        <dbReference type="ChEBI" id="CHEBI:58272"/>
    </ligand>
</feature>
<feature type="binding site" evidence="5">
    <location>
        <position position="122"/>
    </location>
    <ligand>
        <name>(2R)-3-phosphoglycerate</name>
        <dbReference type="ChEBI" id="CHEBI:58272"/>
    </ligand>
</feature>
<feature type="binding site" evidence="3">
    <location>
        <position position="168"/>
    </location>
    <ligand>
        <name>(2R)-3-phosphoglycerate</name>
        <dbReference type="ChEBI" id="CHEBI:58272"/>
    </ligand>
</feature>
<feature type="binding site" evidence="5">
    <location>
        <position position="169"/>
    </location>
    <ligand>
        <name>(2R)-3-phosphoglycerate</name>
        <dbReference type="ChEBI" id="CHEBI:58272"/>
    </ligand>
</feature>
<feature type="binding site" evidence="3">
    <location>
        <position position="211"/>
    </location>
    <ligand>
        <name>ADP</name>
        <dbReference type="ChEBI" id="CHEBI:456216"/>
    </ligand>
</feature>
<feature type="binding site" evidence="3">
    <location>
        <position position="211"/>
    </location>
    <ligand>
        <name>CDP</name>
        <dbReference type="ChEBI" id="CHEBI:58069"/>
    </ligand>
</feature>
<feature type="binding site" evidence="5">
    <location>
        <position position="212"/>
    </location>
    <ligand>
        <name>AMP</name>
        <dbReference type="ChEBI" id="CHEBI:456215"/>
    </ligand>
</feature>
<feature type="binding site" evidence="5">
    <location>
        <position position="212"/>
    </location>
    <ligand>
        <name>ATP</name>
        <dbReference type="ChEBI" id="CHEBI:30616"/>
    </ligand>
</feature>
<feature type="binding site" evidence="3">
    <location>
        <position position="212"/>
    </location>
    <ligand>
        <name>Mg(2+)</name>
        <dbReference type="ChEBI" id="CHEBI:18420"/>
    </ligand>
</feature>
<feature type="binding site" evidence="5">
    <location>
        <position position="213"/>
    </location>
    <ligand>
        <name>AMP</name>
        <dbReference type="ChEBI" id="CHEBI:456215"/>
    </ligand>
</feature>
<feature type="binding site" evidence="3">
    <location>
        <position position="215"/>
    </location>
    <ligand>
        <name>Mg(2+)</name>
        <dbReference type="ChEBI" id="CHEBI:18420"/>
    </ligand>
</feature>
<feature type="binding site" evidence="3">
    <location>
        <position position="216"/>
    </location>
    <ligand>
        <name>CDP</name>
        <dbReference type="ChEBI" id="CHEBI:58069"/>
    </ligand>
</feature>
<feature type="binding site" evidence="3">
    <location>
        <position position="216"/>
    </location>
    <ligand>
        <name>Mg(2+)</name>
        <dbReference type="ChEBI" id="CHEBI:18420"/>
    </ligand>
</feature>
<feature type="binding site" evidence="5">
    <location>
        <position position="217"/>
    </location>
    <ligand>
        <name>AMP</name>
        <dbReference type="ChEBI" id="CHEBI:456215"/>
    </ligand>
</feature>
<feature type="binding site" evidence="5">
    <location>
        <position position="217"/>
    </location>
    <ligand>
        <name>ATP</name>
        <dbReference type="ChEBI" id="CHEBI:30616"/>
    </ligand>
</feature>
<feature type="binding site" evidence="3">
    <location>
        <position position="235"/>
    </location>
    <ligand>
        <name>ADP</name>
        <dbReference type="ChEBI" id="CHEBI:456216"/>
    </ligand>
</feature>
<feature type="binding site" evidence="3">
    <location>
        <position position="235"/>
    </location>
    <ligand>
        <name>CDP</name>
        <dbReference type="ChEBI" id="CHEBI:58069"/>
    </ligand>
</feature>
<feature type="binding site" evidence="5">
    <location>
        <position position="236"/>
    </location>
    <ligand>
        <name>AMP</name>
        <dbReference type="ChEBI" id="CHEBI:456215"/>
    </ligand>
</feature>
<feature type="binding site" evidence="5">
    <location>
        <position position="236"/>
    </location>
    <ligand>
        <name>ATP</name>
        <dbReference type="ChEBI" id="CHEBI:30616"/>
    </ligand>
</feature>
<feature type="binding site" evidence="5">
    <location>
        <position position="310"/>
    </location>
    <ligand>
        <name>AMP</name>
        <dbReference type="ChEBI" id="CHEBI:456215"/>
    </ligand>
</feature>
<feature type="binding site" evidence="5">
    <location>
        <position position="310"/>
    </location>
    <ligand>
        <name>ATP</name>
        <dbReference type="ChEBI" id="CHEBI:30616"/>
    </ligand>
</feature>
<feature type="binding site" evidence="3">
    <location>
        <position position="335"/>
    </location>
    <ligand>
        <name>CDP</name>
        <dbReference type="ChEBI" id="CHEBI:58069"/>
    </ligand>
</feature>
<feature type="binding site" evidence="3">
    <location>
        <position position="337"/>
    </location>
    <ligand>
        <name>CDP</name>
        <dbReference type="ChEBI" id="CHEBI:58069"/>
    </ligand>
</feature>
<feature type="binding site" evidence="3">
    <location>
        <position position="340"/>
    </location>
    <ligand>
        <name>ADP</name>
        <dbReference type="ChEBI" id="CHEBI:456216"/>
    </ligand>
</feature>
<feature type="binding site" evidence="3">
    <location>
        <position position="340"/>
    </location>
    <ligand>
        <name>CDP</name>
        <dbReference type="ChEBI" id="CHEBI:58069"/>
    </ligand>
</feature>
<feature type="binding site" evidence="5">
    <location>
        <position position="341"/>
    </location>
    <ligand>
        <name>AMP</name>
        <dbReference type="ChEBI" id="CHEBI:456215"/>
    </ligand>
</feature>
<feature type="binding site" evidence="5">
    <location>
        <position position="341"/>
    </location>
    <ligand>
        <name>ATP</name>
        <dbReference type="ChEBI" id="CHEBI:30616"/>
    </ligand>
</feature>
<feature type="binding site" evidence="5">
    <location>
        <position position="372"/>
    </location>
    <ligand>
        <name>ATP</name>
        <dbReference type="ChEBI" id="CHEBI:30616"/>
    </ligand>
</feature>
<feature type="binding site" evidence="5">
    <location>
        <position position="372"/>
    </location>
    <ligand>
        <name>Mg(2+)</name>
        <dbReference type="ChEBI" id="CHEBI:18420"/>
    </ligand>
</feature>
<feature type="binding site" evidence="5">
    <location>
        <position position="373"/>
    </location>
    <ligand>
        <name>ATP</name>
        <dbReference type="ChEBI" id="CHEBI:30616"/>
    </ligand>
</feature>
<feature type="modified residue" description="Phosphotyrosine" evidence="6">
    <location>
        <position position="75"/>
    </location>
</feature>
<feature type="modified residue" description="Phosphoserine" evidence="6">
    <location>
        <position position="76"/>
    </location>
</feature>
<feature type="modified residue" description="Phosphoserine" evidence="6">
    <location>
        <position position="143"/>
    </location>
</feature>
<feature type="modified residue" description="Phosphoserine" evidence="6">
    <location>
        <position position="172"/>
    </location>
</feature>
<feature type="modified residue" description="Phosphoserine" evidence="6">
    <location>
        <position position="173"/>
    </location>
</feature>
<feature type="modified residue" description="Phosphoserine" evidence="6">
    <location>
        <position position="183"/>
    </location>
</feature>
<feature type="modified residue" description="Phosphoserine" evidence="6">
    <location>
        <position position="253"/>
    </location>
</feature>
<feature type="modified residue" description="Phosphoserine" evidence="6">
    <location>
        <position position="260"/>
    </location>
</feature>
<feature type="modified residue" description="Phosphothreonine" evidence="6">
    <location>
        <position position="299"/>
    </location>
</feature>
<feature type="modified residue" description="Phosphoserine" evidence="6">
    <location>
        <position position="328"/>
    </location>
</feature>
<feature type="modified residue" description="Phosphoserine" evidence="6">
    <location>
        <position position="351"/>
    </location>
</feature>
<feature type="modified residue" description="Phosphothreonine" evidence="6">
    <location>
        <position position="373"/>
    </location>
</feature>
<feature type="modified residue" description="Phosphoserine" evidence="6">
    <location>
        <position position="387"/>
    </location>
</feature>
<feature type="modified residue" description="Phosphoserine" evidence="6">
    <location>
        <position position="390"/>
    </location>
</feature>
<feature type="modified residue" description="Phosphoserine" evidence="6">
    <location>
        <position position="412"/>
    </location>
</feature>
<feature type="modified residue" description="Phosphoserine" evidence="6">
    <location>
        <position position="413"/>
    </location>
</feature>
<sequence>MSLSTKLAITDVDLKGKNVLIRVDFNVPLDGDRITNNARIVGALPTIKYALEQQPKAVILMSHLGRPNGARVAKYSLKPVAAELSKLLGKPVKFLDDCVGPEVEKACKEAKGGEVILLENLRFHIEEEGSAKVDGKKVKADASAVEAFRKSLTSLGDIFVNDAFGTAHRAHSSMVGVDLPRVSGFLMKKELDYFSKALENPARPFLAILGGAKVADKIQLIDNLLDKVNRLIICGGMAFTFLKVLNGMKIGDSLFDEAGSKNVESMMAKAKKNNVEVFLPVDFVTADKFDKDAKVGSATAEEGIPDGWMGLDCGPKSSAKFAEVITTSKTIVWNGPAGVFEFDNFAKGTKSMLDACVKTCEAGNVVIVGGGDTATVAKKYGKEDALSHVSTGGGASLELLEGKALPGVVALSSK</sequence>
<evidence type="ECO:0000250" key="1"/>
<evidence type="ECO:0000250" key="2">
    <source>
        <dbReference type="UniProtKB" id="A0A7G5KET3"/>
    </source>
</evidence>
<evidence type="ECO:0000250" key="3">
    <source>
        <dbReference type="UniProtKB" id="P00558"/>
    </source>
</evidence>
<evidence type="ECO:0000250" key="4">
    <source>
        <dbReference type="UniProtKB" id="P00560"/>
    </source>
</evidence>
<evidence type="ECO:0000250" key="5">
    <source>
        <dbReference type="UniProtKB" id="Q7SIB7"/>
    </source>
</evidence>
<evidence type="ECO:0000269" key="6">
    <source>
    </source>
</evidence>
<evidence type="ECO:0000305" key="7"/>
<reference key="1">
    <citation type="journal article" date="2002" name="Nature">
        <title>The genome sequence of Schizosaccharomyces pombe.</title>
        <authorList>
            <person name="Wood V."/>
            <person name="Gwilliam R."/>
            <person name="Rajandream M.A."/>
            <person name="Lyne M.H."/>
            <person name="Lyne R."/>
            <person name="Stewart A."/>
            <person name="Sgouros J.G."/>
            <person name="Peat N."/>
            <person name="Hayles J."/>
            <person name="Baker S.G."/>
            <person name="Basham D."/>
            <person name="Bowman S."/>
            <person name="Brooks K."/>
            <person name="Brown D."/>
            <person name="Brown S."/>
            <person name="Chillingworth T."/>
            <person name="Churcher C.M."/>
            <person name="Collins M."/>
            <person name="Connor R."/>
            <person name="Cronin A."/>
            <person name="Davis P."/>
            <person name="Feltwell T."/>
            <person name="Fraser A."/>
            <person name="Gentles S."/>
            <person name="Goble A."/>
            <person name="Hamlin N."/>
            <person name="Harris D.E."/>
            <person name="Hidalgo J."/>
            <person name="Hodgson G."/>
            <person name="Holroyd S."/>
            <person name="Hornsby T."/>
            <person name="Howarth S."/>
            <person name="Huckle E.J."/>
            <person name="Hunt S."/>
            <person name="Jagels K."/>
            <person name="James K.D."/>
            <person name="Jones L."/>
            <person name="Jones M."/>
            <person name="Leather S."/>
            <person name="McDonald S."/>
            <person name="McLean J."/>
            <person name="Mooney P."/>
            <person name="Moule S."/>
            <person name="Mungall K.L."/>
            <person name="Murphy L.D."/>
            <person name="Niblett D."/>
            <person name="Odell C."/>
            <person name="Oliver K."/>
            <person name="O'Neil S."/>
            <person name="Pearson D."/>
            <person name="Quail M.A."/>
            <person name="Rabbinowitsch E."/>
            <person name="Rutherford K.M."/>
            <person name="Rutter S."/>
            <person name="Saunders D."/>
            <person name="Seeger K."/>
            <person name="Sharp S."/>
            <person name="Skelton J."/>
            <person name="Simmonds M.N."/>
            <person name="Squares R."/>
            <person name="Squares S."/>
            <person name="Stevens K."/>
            <person name="Taylor K."/>
            <person name="Taylor R.G."/>
            <person name="Tivey A."/>
            <person name="Walsh S.V."/>
            <person name="Warren T."/>
            <person name="Whitehead S."/>
            <person name="Woodward J.R."/>
            <person name="Volckaert G."/>
            <person name="Aert R."/>
            <person name="Robben J."/>
            <person name="Grymonprez B."/>
            <person name="Weltjens I."/>
            <person name="Vanstreels E."/>
            <person name="Rieger M."/>
            <person name="Schaefer M."/>
            <person name="Mueller-Auer S."/>
            <person name="Gabel C."/>
            <person name="Fuchs M."/>
            <person name="Duesterhoeft A."/>
            <person name="Fritzc C."/>
            <person name="Holzer E."/>
            <person name="Moestl D."/>
            <person name="Hilbert H."/>
            <person name="Borzym K."/>
            <person name="Langer I."/>
            <person name="Beck A."/>
            <person name="Lehrach H."/>
            <person name="Reinhardt R."/>
            <person name="Pohl T.M."/>
            <person name="Eger P."/>
            <person name="Zimmermann W."/>
            <person name="Wedler H."/>
            <person name="Wambutt R."/>
            <person name="Purnelle B."/>
            <person name="Goffeau A."/>
            <person name="Cadieu E."/>
            <person name="Dreano S."/>
            <person name="Gloux S."/>
            <person name="Lelaure V."/>
            <person name="Mottier S."/>
            <person name="Galibert F."/>
            <person name="Aves S.J."/>
            <person name="Xiang Z."/>
            <person name="Hunt C."/>
            <person name="Moore K."/>
            <person name="Hurst S.M."/>
            <person name="Lucas M."/>
            <person name="Rochet M."/>
            <person name="Gaillardin C."/>
            <person name="Tallada V.A."/>
            <person name="Garzon A."/>
            <person name="Thode G."/>
            <person name="Daga R.R."/>
            <person name="Cruzado L."/>
            <person name="Jimenez J."/>
            <person name="Sanchez M."/>
            <person name="del Rey F."/>
            <person name="Benito J."/>
            <person name="Dominguez A."/>
            <person name="Revuelta J.L."/>
            <person name="Moreno S."/>
            <person name="Armstrong J."/>
            <person name="Forsburg S.L."/>
            <person name="Cerutti L."/>
            <person name="Lowe T."/>
            <person name="McCombie W.R."/>
            <person name="Paulsen I."/>
            <person name="Potashkin J."/>
            <person name="Shpakovski G.V."/>
            <person name="Ussery D."/>
            <person name="Barrell B.G."/>
            <person name="Nurse P."/>
        </authorList>
    </citation>
    <scope>NUCLEOTIDE SEQUENCE [LARGE SCALE GENOMIC DNA]</scope>
    <source>
        <strain>972 / ATCC 24843</strain>
    </source>
</reference>
<reference key="2">
    <citation type="journal article" date="2008" name="J. Proteome Res.">
        <title>Phosphoproteome analysis of fission yeast.</title>
        <authorList>
            <person name="Wilson-Grady J.T."/>
            <person name="Villen J."/>
            <person name="Gygi S.P."/>
        </authorList>
    </citation>
    <scope>PHOSPHORYLATION [LARGE SCALE ANALYSIS] AT TYR-75; SER-76; SER-143; SER-172; SER-173; SER-183; SER-253; SER-260; THR-299; SER-328; SER-351; THR-373; SER-387; SER-390; SER-412 AND SER-413</scope>
    <scope>IDENTIFICATION BY MASS SPECTROMETRY</scope>
</reference>
<dbReference type="EC" id="2.7.2.3" evidence="4"/>
<dbReference type="EMBL" id="CU329671">
    <property type="protein sequence ID" value="CAA19322.1"/>
    <property type="molecule type" value="Genomic_DNA"/>
</dbReference>
<dbReference type="PIR" id="T39450">
    <property type="entry name" value="T39450"/>
</dbReference>
<dbReference type="RefSeq" id="NP_596730.1">
    <property type="nucleotide sequence ID" value="NM_001022656.2"/>
</dbReference>
<dbReference type="SMR" id="O60101"/>
<dbReference type="BioGRID" id="276315">
    <property type="interactions" value="14"/>
</dbReference>
<dbReference type="FunCoup" id="O60101">
    <property type="interactions" value="565"/>
</dbReference>
<dbReference type="IntAct" id="O60101">
    <property type="interactions" value="2"/>
</dbReference>
<dbReference type="MINT" id="O60101"/>
<dbReference type="STRING" id="284812.O60101"/>
<dbReference type="iPTMnet" id="O60101"/>
<dbReference type="PaxDb" id="4896-SPBC14F5.04c.1"/>
<dbReference type="EnsemblFungi" id="SPBC14F5.04c.1">
    <property type="protein sequence ID" value="SPBC14F5.04c.1:pep"/>
    <property type="gene ID" value="SPBC14F5.04c"/>
</dbReference>
<dbReference type="GeneID" id="2539764"/>
<dbReference type="KEGG" id="spo:2539764"/>
<dbReference type="PomBase" id="SPBC14F5.04c">
    <property type="gene designation" value="pgk1"/>
</dbReference>
<dbReference type="VEuPathDB" id="FungiDB:SPBC14F5.04c"/>
<dbReference type="eggNOG" id="KOG1367">
    <property type="taxonomic scope" value="Eukaryota"/>
</dbReference>
<dbReference type="HOGENOM" id="CLU_025427_0_2_1"/>
<dbReference type="InParanoid" id="O60101"/>
<dbReference type="OMA" id="DMIFDIG"/>
<dbReference type="PhylomeDB" id="O60101"/>
<dbReference type="Reactome" id="R-SPO-70171">
    <property type="pathway name" value="Glycolysis"/>
</dbReference>
<dbReference type="Reactome" id="R-SPO-70263">
    <property type="pathway name" value="Gluconeogenesis"/>
</dbReference>
<dbReference type="UniPathway" id="UPA00109">
    <property type="reaction ID" value="UER00185"/>
</dbReference>
<dbReference type="PRO" id="PR:O60101"/>
<dbReference type="Proteomes" id="UP000002485">
    <property type="component" value="Chromosome II"/>
</dbReference>
<dbReference type="GO" id="GO:0005829">
    <property type="term" value="C:cytosol"/>
    <property type="evidence" value="ECO:0007005"/>
    <property type="project" value="PomBase"/>
</dbReference>
<dbReference type="GO" id="GO:0005739">
    <property type="term" value="C:mitochondrion"/>
    <property type="evidence" value="ECO:0007669"/>
    <property type="project" value="UniProtKB-SubCell"/>
</dbReference>
<dbReference type="GO" id="GO:0005634">
    <property type="term" value="C:nucleus"/>
    <property type="evidence" value="ECO:0007005"/>
    <property type="project" value="PomBase"/>
</dbReference>
<dbReference type="GO" id="GO:0043531">
    <property type="term" value="F:ADP binding"/>
    <property type="evidence" value="ECO:0000318"/>
    <property type="project" value="GO_Central"/>
</dbReference>
<dbReference type="GO" id="GO:0005524">
    <property type="term" value="F:ATP binding"/>
    <property type="evidence" value="ECO:0000318"/>
    <property type="project" value="GO_Central"/>
</dbReference>
<dbReference type="GO" id="GO:0046872">
    <property type="term" value="F:metal ion binding"/>
    <property type="evidence" value="ECO:0007669"/>
    <property type="project" value="UniProtKB-KW"/>
</dbReference>
<dbReference type="GO" id="GO:0004618">
    <property type="term" value="F:phosphoglycerate kinase activity"/>
    <property type="evidence" value="ECO:0000318"/>
    <property type="project" value="GO_Central"/>
</dbReference>
<dbReference type="GO" id="GO:0061621">
    <property type="term" value="P:canonical glycolysis"/>
    <property type="evidence" value="ECO:0000266"/>
    <property type="project" value="PomBase"/>
</dbReference>
<dbReference type="GO" id="GO:0006094">
    <property type="term" value="P:gluconeogenesis"/>
    <property type="evidence" value="ECO:0000318"/>
    <property type="project" value="GO_Central"/>
</dbReference>
<dbReference type="GO" id="GO:0006096">
    <property type="term" value="P:glycolytic process"/>
    <property type="evidence" value="ECO:0000318"/>
    <property type="project" value="GO_Central"/>
</dbReference>
<dbReference type="CDD" id="cd00318">
    <property type="entry name" value="Phosphoglycerate_kinase"/>
    <property type="match status" value="1"/>
</dbReference>
<dbReference type="FunFam" id="3.40.50.1260:FF:000019">
    <property type="entry name" value="Phosphoglycerate kinase 1"/>
    <property type="match status" value="1"/>
</dbReference>
<dbReference type="FunFam" id="3.40.50.1260:FF:000031">
    <property type="entry name" value="Phosphoglycerate kinase 1"/>
    <property type="match status" value="1"/>
</dbReference>
<dbReference type="Gene3D" id="3.40.50.1260">
    <property type="entry name" value="Phosphoglycerate kinase, N-terminal domain"/>
    <property type="match status" value="3"/>
</dbReference>
<dbReference type="HAMAP" id="MF_00145">
    <property type="entry name" value="Phosphoglyc_kinase"/>
    <property type="match status" value="1"/>
</dbReference>
<dbReference type="InterPro" id="IPR001576">
    <property type="entry name" value="Phosphoglycerate_kinase"/>
</dbReference>
<dbReference type="InterPro" id="IPR015911">
    <property type="entry name" value="Phosphoglycerate_kinase_CS"/>
</dbReference>
<dbReference type="InterPro" id="IPR015824">
    <property type="entry name" value="Phosphoglycerate_kinase_N"/>
</dbReference>
<dbReference type="InterPro" id="IPR036043">
    <property type="entry name" value="Phosphoglycerate_kinase_sf"/>
</dbReference>
<dbReference type="PANTHER" id="PTHR11406">
    <property type="entry name" value="PHOSPHOGLYCERATE KINASE"/>
    <property type="match status" value="1"/>
</dbReference>
<dbReference type="PANTHER" id="PTHR11406:SF0">
    <property type="entry name" value="PHOSPHOGLYCERATE KINASE"/>
    <property type="match status" value="1"/>
</dbReference>
<dbReference type="Pfam" id="PF00162">
    <property type="entry name" value="PGK"/>
    <property type="match status" value="1"/>
</dbReference>
<dbReference type="PIRSF" id="PIRSF000724">
    <property type="entry name" value="Pgk"/>
    <property type="match status" value="1"/>
</dbReference>
<dbReference type="PRINTS" id="PR00477">
    <property type="entry name" value="PHGLYCKINASE"/>
</dbReference>
<dbReference type="SUPFAM" id="SSF53748">
    <property type="entry name" value="Phosphoglycerate kinase"/>
    <property type="match status" value="1"/>
</dbReference>
<dbReference type="PROSITE" id="PS00111">
    <property type="entry name" value="PGLYCERATE_KINASE"/>
    <property type="match status" value="1"/>
</dbReference>
<keyword id="KW-0067">ATP-binding</keyword>
<keyword id="KW-0963">Cytoplasm</keyword>
<keyword id="KW-0324">Glycolysis</keyword>
<keyword id="KW-0418">Kinase</keyword>
<keyword id="KW-0460">Magnesium</keyword>
<keyword id="KW-0479">Metal-binding</keyword>
<keyword id="KW-0496">Mitochondrion</keyword>
<keyword id="KW-0547">Nucleotide-binding</keyword>
<keyword id="KW-0597">Phosphoprotein</keyword>
<keyword id="KW-1185">Reference proteome</keyword>
<keyword id="KW-0808">Transferase</keyword>
<name>PGK_SCHPO</name>
<proteinExistence type="evidence at protein level"/>
<comment type="function">
    <text evidence="2 3 4">Catalyzes one of the two ATP producing reactions in the glycolytic pathway via the reversible conversion of 1,3-diphosphoglycerate to 3-phosphoglycerate (By similarity). Both L- and D- forms of purine and pyrimidine nucleotides can be used as substrates, but the activity is much lower on pyrimidines (By similarity). Negatively regulates the biosynthesis of acetyl-CoA from pyruvate in the mitochondrion (By similarity).</text>
</comment>
<comment type="catalytic activity">
    <reaction evidence="4">
        <text>(2R)-3-phosphoglycerate + ATP = (2R)-3-phospho-glyceroyl phosphate + ADP</text>
        <dbReference type="Rhea" id="RHEA:14801"/>
        <dbReference type="ChEBI" id="CHEBI:30616"/>
        <dbReference type="ChEBI" id="CHEBI:57604"/>
        <dbReference type="ChEBI" id="CHEBI:58272"/>
        <dbReference type="ChEBI" id="CHEBI:456216"/>
        <dbReference type="EC" id="2.7.2.3"/>
    </reaction>
</comment>
<comment type="cofactor">
    <cofactor evidence="3">
        <name>Mg(2+)</name>
        <dbReference type="ChEBI" id="CHEBI:18420"/>
    </cofactor>
</comment>
<comment type="pathway">
    <text evidence="4">Carbohydrate degradation; glycolysis; pyruvate from D-glyceraldehyde 3-phosphate: step 2/5.</text>
</comment>
<comment type="subunit">
    <text evidence="1">Monomer.</text>
</comment>
<comment type="subcellular location">
    <subcellularLocation>
        <location evidence="4">Cytoplasm</location>
    </subcellularLocation>
    <subcellularLocation>
        <location evidence="4">Mitochondrion</location>
    </subcellularLocation>
</comment>
<comment type="similarity">
    <text evidence="7">Belongs to the phosphoglycerate kinase family.</text>
</comment>
<organism>
    <name type="scientific">Schizosaccharomyces pombe (strain 972 / ATCC 24843)</name>
    <name type="common">Fission yeast</name>
    <dbReference type="NCBI Taxonomy" id="284812"/>
    <lineage>
        <taxon>Eukaryota</taxon>
        <taxon>Fungi</taxon>
        <taxon>Dikarya</taxon>
        <taxon>Ascomycota</taxon>
        <taxon>Taphrinomycotina</taxon>
        <taxon>Schizosaccharomycetes</taxon>
        <taxon>Schizosaccharomycetales</taxon>
        <taxon>Schizosaccharomycetaceae</taxon>
        <taxon>Schizosaccharomyces</taxon>
    </lineage>
</organism>
<accession>O60101</accession>